<evidence type="ECO:0000255" key="1">
    <source>
        <dbReference type="HAMAP-Rule" id="MF_00669"/>
    </source>
</evidence>
<accession>A7GTL2</accession>
<reference key="1">
    <citation type="journal article" date="2008" name="Chem. Biol. Interact.">
        <title>Extending the Bacillus cereus group genomics to putative food-borne pathogens of different toxicity.</title>
        <authorList>
            <person name="Lapidus A."/>
            <person name="Goltsman E."/>
            <person name="Auger S."/>
            <person name="Galleron N."/>
            <person name="Segurens B."/>
            <person name="Dossat C."/>
            <person name="Land M.L."/>
            <person name="Broussolle V."/>
            <person name="Brillard J."/>
            <person name="Guinebretiere M.-H."/>
            <person name="Sanchis V."/>
            <person name="Nguen-the C."/>
            <person name="Lereclus D."/>
            <person name="Richardson P."/>
            <person name="Wincker P."/>
            <person name="Weissenbach J."/>
            <person name="Ehrlich S.D."/>
            <person name="Sorokin A."/>
        </authorList>
    </citation>
    <scope>NUCLEOTIDE SEQUENCE [LARGE SCALE GENOMIC DNA]</scope>
    <source>
        <strain>DSM 22905 / CIP 110041 / 391-98 / NVH 391-98</strain>
    </source>
</reference>
<keyword id="KW-0749">Sporulation</keyword>
<dbReference type="EMBL" id="CP000764">
    <property type="protein sequence ID" value="ABS23470.1"/>
    <property type="molecule type" value="Genomic_DNA"/>
</dbReference>
<dbReference type="RefSeq" id="WP_012095709.1">
    <property type="nucleotide sequence ID" value="NC_009674.1"/>
</dbReference>
<dbReference type="STRING" id="315749.Bcer98_3251"/>
<dbReference type="GeneID" id="33898496"/>
<dbReference type="KEGG" id="bcy:Bcer98_3251"/>
<dbReference type="eggNOG" id="ENOG5032YQ7">
    <property type="taxonomic scope" value="Bacteria"/>
</dbReference>
<dbReference type="HOGENOM" id="CLU_188877_0_0_9"/>
<dbReference type="OrthoDB" id="2453696at2"/>
<dbReference type="Proteomes" id="UP000002300">
    <property type="component" value="Chromosome"/>
</dbReference>
<dbReference type="GO" id="GO:0030436">
    <property type="term" value="P:asexual sporulation"/>
    <property type="evidence" value="ECO:0007669"/>
    <property type="project" value="UniProtKB-UniRule"/>
</dbReference>
<dbReference type="GO" id="GO:0030435">
    <property type="term" value="P:sporulation resulting in formation of a cellular spore"/>
    <property type="evidence" value="ECO:0007669"/>
    <property type="project" value="UniProtKB-KW"/>
</dbReference>
<dbReference type="HAMAP" id="MF_00669">
    <property type="entry name" value="SspI"/>
    <property type="match status" value="1"/>
</dbReference>
<dbReference type="InterPro" id="IPR017525">
    <property type="entry name" value="SspI"/>
</dbReference>
<dbReference type="NCBIfam" id="TIGR03092">
    <property type="entry name" value="SASP_sspI"/>
    <property type="match status" value="1"/>
</dbReference>
<dbReference type="Pfam" id="PF14098">
    <property type="entry name" value="SSPI"/>
    <property type="match status" value="1"/>
</dbReference>
<name>SSPI_BACCN</name>
<comment type="subcellular location">
    <subcellularLocation>
        <location evidence="1">Spore core</location>
    </subcellularLocation>
</comment>
<comment type="induction">
    <text evidence="1">Expressed only in the forespore compartment of sporulating cells.</text>
</comment>
<comment type="similarity">
    <text evidence="1">Belongs to the SspI family.</text>
</comment>
<proteinExistence type="inferred from homology"/>
<organism>
    <name type="scientific">Bacillus cytotoxicus (strain DSM 22905 / CIP 110041 / 391-98 / NVH 391-98)</name>
    <dbReference type="NCBI Taxonomy" id="315749"/>
    <lineage>
        <taxon>Bacteria</taxon>
        <taxon>Bacillati</taxon>
        <taxon>Bacillota</taxon>
        <taxon>Bacilli</taxon>
        <taxon>Bacillales</taxon>
        <taxon>Bacillaceae</taxon>
        <taxon>Bacillus</taxon>
        <taxon>Bacillus cereus group</taxon>
    </lineage>
</organism>
<sequence length="70" mass="7840">MNFNLRGAVLANIAGNTQDQLQETIVDAIQSGEEKMLPGLGVLFEVIWKNADENERHDMLETLEQGLKNK</sequence>
<feature type="chain" id="PRO_1000082938" description="Small, acid-soluble spore protein I">
    <location>
        <begin position="1"/>
        <end position="70"/>
    </location>
</feature>
<gene>
    <name evidence="1" type="primary">sspI</name>
    <name type="ordered locus">Bcer98_3251</name>
</gene>
<protein>
    <recommendedName>
        <fullName evidence="1">Small, acid-soluble spore protein I</fullName>
        <shortName evidence="1">SASP I</shortName>
    </recommendedName>
</protein>